<dbReference type="EMBL" id="U09493">
    <property type="protein sequence ID" value="AAB60536.1"/>
    <property type="status" value="ALT_TERM"/>
    <property type="molecule type" value="Unassigned_DNA"/>
</dbReference>
<dbReference type="SMR" id="P29069"/>
<dbReference type="InterPro" id="IPR035149">
    <property type="entry name" value="DUF5479"/>
</dbReference>
<dbReference type="Pfam" id="PF17575">
    <property type="entry name" value="DUF5479"/>
    <property type="match status" value="1"/>
</dbReference>
<gene>
    <name type="primary">E5</name>
</gene>
<proteinExistence type="inferred from homology"/>
<sequence length="101" mass="11376">MGFSDVYACNPFPSAAFVTQRFFCTNKSCYAKQVSWLHGHENAGLHHKIFIQHAKLLAIAQLTYRINLKTKQLQIKFCSMAALVFSLEDLESVVPEVLGVD</sequence>
<comment type="function">
    <text>Not required for CRPV to induce papillomas, but may facilitate the functioning of other viral or cellular factors involved in the induction of papillomas.</text>
</comment>
<comment type="similarity">
    <text evidence="1">Belongs to the papillomaviridae E5 protein family.</text>
</comment>
<keyword id="KW-0244">Early protein</keyword>
<organism>
    <name type="scientific">Cottontail rabbit papillomavirus (strain Washington B)</name>
    <name type="common">CRPV</name>
    <name type="synonym">Papillomavirus sylvilagi</name>
    <dbReference type="NCBI Taxonomy" id="31554"/>
    <lineage>
        <taxon>Viruses</taxon>
        <taxon>Monodnaviria</taxon>
        <taxon>Shotokuvirae</taxon>
        <taxon>Cossaviricota</taxon>
        <taxon>Papovaviricetes</taxon>
        <taxon>Zurhausenvirales</taxon>
        <taxon>Papillomaviridae</taxon>
        <taxon>Firstpapillomavirinae</taxon>
        <taxon>Kappapapillomavirus</taxon>
        <taxon>Kappapapillomavirus 2</taxon>
    </lineage>
</organism>
<name>VE5_CRPVW</name>
<evidence type="ECO:0000305" key="1"/>
<reference key="1">
    <citation type="journal article" date="1992" name="J. Virol.">
        <title>The putative E5 open reading frame of cottontail rabbit papillomavirus is dispensable for papilloma formation in domestic rabbits.</title>
        <authorList>
            <person name="Brandsma J.L."/>
            <person name="Yang Z.-H."/>
            <person name="Dmimaio D."/>
            <person name="Bathold S.W."/>
            <person name="Johnson E."/>
            <person name="Xiao W."/>
        </authorList>
    </citation>
    <scope>NUCLEOTIDE SEQUENCE [GENOMIC DNA]</scope>
</reference>
<protein>
    <recommendedName>
        <fullName>Probable protein E5</fullName>
    </recommendedName>
</protein>
<accession>P29069</accession>
<organismHost>
    <name type="scientific">Rodentia</name>
    <dbReference type="NCBI Taxonomy" id="9989"/>
</organismHost>
<feature type="chain" id="PRO_0000133302" description="Probable protein E5">
    <location>
        <begin position="1"/>
        <end position="101"/>
    </location>
</feature>